<proteinExistence type="inferred from homology"/>
<accession>C3LR84</accession>
<evidence type="ECO:0000255" key="1">
    <source>
        <dbReference type="HAMAP-Rule" id="MF_00715"/>
    </source>
</evidence>
<name>SLYX_VIBCM</name>
<comment type="similarity">
    <text evidence="1">Belongs to the SlyX family.</text>
</comment>
<dbReference type="EMBL" id="CP001233">
    <property type="protein sequence ID" value="ACP04664.1"/>
    <property type="molecule type" value="Genomic_DNA"/>
</dbReference>
<dbReference type="RefSeq" id="WP_001890311.1">
    <property type="nucleotide sequence ID" value="NC_012578.1"/>
</dbReference>
<dbReference type="SMR" id="C3LR84"/>
<dbReference type="KEGG" id="vcm:VCM66_0336"/>
<dbReference type="HOGENOM" id="CLU_180796_4_0_6"/>
<dbReference type="Proteomes" id="UP000001217">
    <property type="component" value="Chromosome I"/>
</dbReference>
<dbReference type="Gene3D" id="1.20.5.300">
    <property type="match status" value="1"/>
</dbReference>
<dbReference type="HAMAP" id="MF_00715">
    <property type="entry name" value="SlyX"/>
    <property type="match status" value="1"/>
</dbReference>
<dbReference type="InterPro" id="IPR007236">
    <property type="entry name" value="SlyX"/>
</dbReference>
<dbReference type="NCBIfam" id="NF003357">
    <property type="entry name" value="PRK04406.1"/>
    <property type="match status" value="1"/>
</dbReference>
<dbReference type="PANTHER" id="PTHR36508">
    <property type="entry name" value="PROTEIN SLYX"/>
    <property type="match status" value="1"/>
</dbReference>
<dbReference type="PANTHER" id="PTHR36508:SF1">
    <property type="entry name" value="PROTEIN SLYX"/>
    <property type="match status" value="1"/>
</dbReference>
<dbReference type="Pfam" id="PF04102">
    <property type="entry name" value="SlyX"/>
    <property type="match status" value="1"/>
</dbReference>
<feature type="chain" id="PRO_1000148010" description="Protein SlyX homolog">
    <location>
        <begin position="1"/>
        <end position="72"/>
    </location>
</feature>
<gene>
    <name evidence="1" type="primary">slyX</name>
    <name type="ordered locus">VCM66_0336</name>
</gene>
<organism>
    <name type="scientific">Vibrio cholerae serotype O1 (strain M66-2)</name>
    <dbReference type="NCBI Taxonomy" id="579112"/>
    <lineage>
        <taxon>Bacteria</taxon>
        <taxon>Pseudomonadati</taxon>
        <taxon>Pseudomonadota</taxon>
        <taxon>Gammaproteobacteria</taxon>
        <taxon>Vibrionales</taxon>
        <taxon>Vibrionaceae</taxon>
        <taxon>Vibrio</taxon>
    </lineage>
</organism>
<protein>
    <recommendedName>
        <fullName evidence="1">Protein SlyX homolog</fullName>
    </recommendedName>
</protein>
<sequence>MSLTQLQERIEDLECKLAFQEQTIETLNDALTQQQLLLSKMQDQMKYVVGKVKNMDTSTLADPAHETPPPHY</sequence>
<reference key="1">
    <citation type="journal article" date="2008" name="PLoS ONE">
        <title>A recalibrated molecular clock and independent origins for the cholera pandemic clones.</title>
        <authorList>
            <person name="Feng L."/>
            <person name="Reeves P.R."/>
            <person name="Lan R."/>
            <person name="Ren Y."/>
            <person name="Gao C."/>
            <person name="Zhou Z."/>
            <person name="Ren Y."/>
            <person name="Cheng J."/>
            <person name="Wang W."/>
            <person name="Wang J."/>
            <person name="Qian W."/>
            <person name="Li D."/>
            <person name="Wang L."/>
        </authorList>
    </citation>
    <scope>NUCLEOTIDE SEQUENCE [LARGE SCALE GENOMIC DNA]</scope>
    <source>
        <strain>M66-2</strain>
    </source>
</reference>